<protein>
    <recommendedName>
        <fullName>Inner membrane protein YdgC</fullName>
    </recommendedName>
</protein>
<keyword id="KW-0997">Cell inner membrane</keyword>
<keyword id="KW-1003">Cell membrane</keyword>
<keyword id="KW-0472">Membrane</keyword>
<keyword id="KW-1185">Reference proteome</keyword>
<keyword id="KW-0812">Transmembrane</keyword>
<keyword id="KW-1133">Transmembrane helix</keyword>
<sequence length="111" mass="12323">MGLVIKAALGALVVLLIGVLAKTKNYYIAGLIPLFPTFALIAHYIVASERGIEALRATIIFSMWSIIPYFVYLVSLWYFTGMMRLPAAFVGSVACWGISAWVLIICWIKLH</sequence>
<dbReference type="EMBL" id="AE005674">
    <property type="protein sequence ID" value="AAN43211.1"/>
    <property type="molecule type" value="Genomic_DNA"/>
</dbReference>
<dbReference type="EMBL" id="AE014073">
    <property type="protein sequence ID" value="AAP17099.1"/>
    <property type="molecule type" value="Genomic_DNA"/>
</dbReference>
<dbReference type="RefSeq" id="NP_707504.1">
    <property type="nucleotide sequence ID" value="NC_004337.2"/>
</dbReference>
<dbReference type="RefSeq" id="WP_000524868.1">
    <property type="nucleotide sequence ID" value="NZ_WPGW01000024.1"/>
</dbReference>
<dbReference type="STRING" id="198214.SF1628"/>
<dbReference type="PaxDb" id="198214-SF1628"/>
<dbReference type="GeneID" id="1024842"/>
<dbReference type="KEGG" id="sfl:SF1628"/>
<dbReference type="KEGG" id="sfx:S1760"/>
<dbReference type="PATRIC" id="fig|198214.7.peg.1922"/>
<dbReference type="HOGENOM" id="CLU_140962_0_0_6"/>
<dbReference type="Proteomes" id="UP000001006">
    <property type="component" value="Chromosome"/>
</dbReference>
<dbReference type="Proteomes" id="UP000002673">
    <property type="component" value="Chromosome"/>
</dbReference>
<dbReference type="GO" id="GO:0005886">
    <property type="term" value="C:plasma membrane"/>
    <property type="evidence" value="ECO:0007669"/>
    <property type="project" value="UniProtKB-SubCell"/>
</dbReference>
<dbReference type="InterPro" id="IPR009707">
    <property type="entry name" value="GlpM/YdgC"/>
</dbReference>
<dbReference type="Pfam" id="PF06942">
    <property type="entry name" value="GlpM"/>
    <property type="match status" value="1"/>
</dbReference>
<comment type="subcellular location">
    <subcellularLocation>
        <location evidence="1">Cell inner membrane</location>
        <topology evidence="1">Multi-pass membrane protein</topology>
    </subcellularLocation>
</comment>
<comment type="similarity">
    <text evidence="3">To P.aeruginosa GlpM.</text>
</comment>
<name>YDGC_SHIFL</name>
<reference key="1">
    <citation type="journal article" date="2002" name="Nucleic Acids Res.">
        <title>Genome sequence of Shigella flexneri 2a: insights into pathogenicity through comparison with genomes of Escherichia coli K12 and O157.</title>
        <authorList>
            <person name="Jin Q."/>
            <person name="Yuan Z."/>
            <person name="Xu J."/>
            <person name="Wang Y."/>
            <person name="Shen Y."/>
            <person name="Lu W."/>
            <person name="Wang J."/>
            <person name="Liu H."/>
            <person name="Yang J."/>
            <person name="Yang F."/>
            <person name="Zhang X."/>
            <person name="Zhang J."/>
            <person name="Yang G."/>
            <person name="Wu H."/>
            <person name="Qu D."/>
            <person name="Dong J."/>
            <person name="Sun L."/>
            <person name="Xue Y."/>
            <person name="Zhao A."/>
            <person name="Gao Y."/>
            <person name="Zhu J."/>
            <person name="Kan B."/>
            <person name="Ding K."/>
            <person name="Chen S."/>
            <person name="Cheng H."/>
            <person name="Yao Z."/>
            <person name="He B."/>
            <person name="Chen R."/>
            <person name="Ma D."/>
            <person name="Qiang B."/>
            <person name="Wen Y."/>
            <person name="Hou Y."/>
            <person name="Yu J."/>
        </authorList>
    </citation>
    <scope>NUCLEOTIDE SEQUENCE [LARGE SCALE GENOMIC DNA]</scope>
    <source>
        <strain>301 / Serotype 2a</strain>
    </source>
</reference>
<reference key="2">
    <citation type="journal article" date="2003" name="Infect. Immun.">
        <title>Complete genome sequence and comparative genomics of Shigella flexneri serotype 2a strain 2457T.</title>
        <authorList>
            <person name="Wei J."/>
            <person name="Goldberg M.B."/>
            <person name="Burland V."/>
            <person name="Venkatesan M.M."/>
            <person name="Deng W."/>
            <person name="Fournier G."/>
            <person name="Mayhew G.F."/>
            <person name="Plunkett G. III"/>
            <person name="Rose D.J."/>
            <person name="Darling A."/>
            <person name="Mau B."/>
            <person name="Perna N.T."/>
            <person name="Payne S.M."/>
            <person name="Runyen-Janecky L.J."/>
            <person name="Zhou S."/>
            <person name="Schwartz D.C."/>
            <person name="Blattner F.R."/>
        </authorList>
    </citation>
    <scope>NUCLEOTIDE SEQUENCE [LARGE SCALE GENOMIC DNA]</scope>
    <source>
        <strain>ATCC 700930 / 2457T / Serotype 2a</strain>
    </source>
</reference>
<gene>
    <name type="primary">ydgC</name>
    <name type="ordered locus">SF1628</name>
    <name type="ordered locus">S1760</name>
</gene>
<evidence type="ECO:0000250" key="1"/>
<evidence type="ECO:0000255" key="2"/>
<evidence type="ECO:0000305" key="3"/>
<feature type="chain" id="PRO_0000168971" description="Inner membrane protein YdgC">
    <location>
        <begin position="1"/>
        <end position="111"/>
    </location>
</feature>
<feature type="topological domain" description="Cytoplasmic" evidence="2">
    <location>
        <begin position="1"/>
        <end position="26"/>
    </location>
</feature>
<feature type="transmembrane region" description="Helical" evidence="2">
    <location>
        <begin position="27"/>
        <end position="47"/>
    </location>
</feature>
<feature type="topological domain" description="Periplasmic" evidence="2">
    <location>
        <begin position="48"/>
        <end position="58"/>
    </location>
</feature>
<feature type="transmembrane region" description="Helical" evidence="2">
    <location>
        <begin position="59"/>
        <end position="79"/>
    </location>
</feature>
<feature type="topological domain" description="Cytoplasmic" evidence="2">
    <location>
        <begin position="80"/>
        <end position="87"/>
    </location>
</feature>
<feature type="transmembrane region" description="Helical" evidence="2">
    <location>
        <begin position="88"/>
        <end position="108"/>
    </location>
</feature>
<feature type="topological domain" description="Periplasmic" evidence="2">
    <location>
        <begin position="109"/>
        <end position="111"/>
    </location>
</feature>
<accession>P0ACX2</accession>
<accession>P52110</accession>
<accession>P77466</accession>
<proteinExistence type="inferred from homology"/>
<organism>
    <name type="scientific">Shigella flexneri</name>
    <dbReference type="NCBI Taxonomy" id="623"/>
    <lineage>
        <taxon>Bacteria</taxon>
        <taxon>Pseudomonadati</taxon>
        <taxon>Pseudomonadota</taxon>
        <taxon>Gammaproteobacteria</taxon>
        <taxon>Enterobacterales</taxon>
        <taxon>Enterobacteriaceae</taxon>
        <taxon>Shigella</taxon>
    </lineage>
</organism>